<keyword id="KW-0125">Carotenoid biosynthesis</keyword>
<keyword id="KW-0256">Endoplasmic reticulum</keyword>
<keyword id="KW-0414">Isoprene biosynthesis</keyword>
<keyword id="KW-0460">Magnesium</keyword>
<keyword id="KW-0479">Metal-binding</keyword>
<keyword id="KW-1185">Reference proteome</keyword>
<keyword id="KW-0732">Signal</keyword>
<keyword id="KW-0808">Transferase</keyword>
<proteinExistence type="evidence at protein level"/>
<feature type="signal peptide" evidence="4">
    <location>
        <begin position="1"/>
        <end position="24"/>
    </location>
</feature>
<feature type="chain" id="PRO_0000045402" description="Heterodimeric geranylgeranyl pyrophosphate synthase large subunit 2">
    <location>
        <begin position="25"/>
        <end position="376"/>
    </location>
</feature>
<feature type="binding site" evidence="2">
    <location>
        <position position="125"/>
    </location>
    <ligand>
        <name>isopentenyl diphosphate</name>
        <dbReference type="ChEBI" id="CHEBI:128769"/>
    </ligand>
</feature>
<feature type="binding site" evidence="2">
    <location>
        <position position="128"/>
    </location>
    <ligand>
        <name>isopentenyl diphosphate</name>
        <dbReference type="ChEBI" id="CHEBI:128769"/>
    </ligand>
</feature>
<feature type="binding site" evidence="3">
    <location>
        <position position="157"/>
    </location>
    <ligand>
        <name>isopentenyl diphosphate</name>
        <dbReference type="ChEBI" id="CHEBI:128769"/>
    </ligand>
</feature>
<feature type="binding site" evidence="2">
    <location>
        <position position="164"/>
    </location>
    <ligand>
        <name>Mg(2+)</name>
        <dbReference type="ChEBI" id="CHEBI:18420"/>
        <label>1</label>
    </ligand>
</feature>
<feature type="binding site" evidence="2">
    <location>
        <position position="164"/>
    </location>
    <ligand>
        <name>Mg(2+)</name>
        <dbReference type="ChEBI" id="CHEBI:18420"/>
        <label>2</label>
    </ligand>
</feature>
<feature type="binding site" evidence="2">
    <location>
        <position position="170"/>
    </location>
    <ligand>
        <name>Mg(2+)</name>
        <dbReference type="ChEBI" id="CHEBI:18420"/>
        <label>1</label>
    </ligand>
</feature>
<feature type="binding site" evidence="2">
    <location>
        <position position="170"/>
    </location>
    <ligand>
        <name>Mg(2+)</name>
        <dbReference type="ChEBI" id="CHEBI:18420"/>
        <label>2</label>
    </ligand>
</feature>
<feature type="binding site" evidence="1">
    <location>
        <position position="175"/>
    </location>
    <ligand>
        <name>dimethylallyl diphosphate</name>
        <dbReference type="ChEBI" id="CHEBI:57623"/>
    </ligand>
</feature>
<feature type="binding site" evidence="2">
    <location>
        <position position="176"/>
    </location>
    <ligand>
        <name>isopentenyl diphosphate</name>
        <dbReference type="ChEBI" id="CHEBI:128769"/>
    </ligand>
</feature>
<feature type="binding site" evidence="1">
    <location>
        <position position="261"/>
    </location>
    <ligand>
        <name>dimethylallyl diphosphate</name>
        <dbReference type="ChEBI" id="CHEBI:57623"/>
    </ligand>
</feature>
<feature type="binding site" evidence="1">
    <location>
        <position position="262"/>
    </location>
    <ligand>
        <name>dimethylallyl diphosphate</name>
        <dbReference type="ChEBI" id="CHEBI:57623"/>
    </ligand>
</feature>
<feature type="binding site" evidence="1">
    <location>
        <position position="299"/>
    </location>
    <ligand>
        <name>dimethylallyl diphosphate</name>
        <dbReference type="ChEBI" id="CHEBI:57623"/>
    </ligand>
</feature>
<feature type="binding site" evidence="1">
    <location>
        <position position="316"/>
    </location>
    <ligand>
        <name>dimethylallyl diphosphate</name>
        <dbReference type="ChEBI" id="CHEBI:57623"/>
    </ligand>
</feature>
<feature type="binding site" evidence="1">
    <location>
        <position position="326"/>
    </location>
    <ligand>
        <name>dimethylallyl diphosphate</name>
        <dbReference type="ChEBI" id="CHEBI:57623"/>
    </ligand>
</feature>
<feature type="sequence conflict" description="In Ref. 1; AAB67730." evidence="8" ref="1">
    <original>AM</original>
    <variation>TI</variation>
    <location>
        <begin position="146"/>
        <end position="147"/>
    </location>
</feature>
<feature type="sequence conflict" description="In Ref. 1; AAB67730." evidence="8" ref="1">
    <original>H</original>
    <variation>D</variation>
    <location>
        <position position="182"/>
    </location>
</feature>
<protein>
    <recommendedName>
        <fullName>Heterodimeric geranylgeranyl pyrophosphate synthase large subunit 2</fullName>
        <shortName>GGPP synthase 2</shortName>
        <shortName>GGPS2</shortName>
        <ecNumber>2.5.1.-</ecNumber>
    </recommendedName>
    <alternativeName>
        <fullName>(2E,6E)-farnesyl diphosphate synthase 2</fullName>
    </alternativeName>
    <alternativeName>
        <fullName>Dimethylallyltranstransferase 2</fullName>
        <ecNumber>2.5.1.1</ecNumber>
    </alternativeName>
    <alternativeName>
        <fullName>Farnesyl diphosphate synthase 2</fullName>
    </alternativeName>
    <alternativeName>
        <fullName>Farnesyltranstransferase 2</fullName>
        <ecNumber evidence="7">2.5.1.29</ecNumber>
    </alternativeName>
    <alternativeName>
        <fullName>Geranyltranstransferase 2</fullName>
        <ecNumber>2.5.1.10</ecNumber>
    </alternativeName>
</protein>
<accession>O04046</accession>
<accession>Q38917</accession>
<accession>Q7DN59</accession>
<reference key="1">
    <citation type="online journal article" date="1996" name="Plant Gene Register">
        <title>Two more members of an Arabidopsis geranylgeranyl pyrophosphate synthase gene family.</title>
        <authorList>
            <person name="Scolnik P.A."/>
            <person name="Bartley G.E."/>
        </authorList>
        <locator>PGR96-014</locator>
    </citation>
    <scope>NUCLEOTIDE SEQUENCE [MRNA]</scope>
    <source>
        <strain>cv. Landsberg erecta</strain>
        <tissue>Flower</tissue>
    </source>
</reference>
<reference key="2">
    <citation type="journal article" date="1999" name="Nature">
        <title>Sequence and analysis of chromosome 2 of the plant Arabidopsis thaliana.</title>
        <authorList>
            <person name="Lin X."/>
            <person name="Kaul S."/>
            <person name="Rounsley S.D."/>
            <person name="Shea T.P."/>
            <person name="Benito M.-I."/>
            <person name="Town C.D."/>
            <person name="Fujii C.Y."/>
            <person name="Mason T.M."/>
            <person name="Bowman C.L."/>
            <person name="Barnstead M.E."/>
            <person name="Feldblyum T.V."/>
            <person name="Buell C.R."/>
            <person name="Ketchum K.A."/>
            <person name="Lee J.J."/>
            <person name="Ronning C.M."/>
            <person name="Koo H.L."/>
            <person name="Moffat K.S."/>
            <person name="Cronin L.A."/>
            <person name="Shen M."/>
            <person name="Pai G."/>
            <person name="Van Aken S."/>
            <person name="Umayam L."/>
            <person name="Tallon L.J."/>
            <person name="Gill J.E."/>
            <person name="Adams M.D."/>
            <person name="Carrera A.J."/>
            <person name="Creasy T.H."/>
            <person name="Goodman H.M."/>
            <person name="Somerville C.R."/>
            <person name="Copenhaver G.P."/>
            <person name="Preuss D."/>
            <person name="Nierman W.C."/>
            <person name="White O."/>
            <person name="Eisen J.A."/>
            <person name="Salzberg S.L."/>
            <person name="Fraser C.M."/>
            <person name="Venter J.C."/>
        </authorList>
    </citation>
    <scope>NUCLEOTIDE SEQUENCE [LARGE SCALE GENOMIC DNA]</scope>
    <source>
        <strain>cv. Columbia</strain>
    </source>
</reference>
<reference key="3">
    <citation type="journal article" date="2017" name="Plant J.">
        <title>Araport11: a complete reannotation of the Arabidopsis thaliana reference genome.</title>
        <authorList>
            <person name="Cheng C.Y."/>
            <person name="Krishnakumar V."/>
            <person name="Chan A.P."/>
            <person name="Thibaud-Nissen F."/>
            <person name="Schobel S."/>
            <person name="Town C.D."/>
        </authorList>
    </citation>
    <scope>GENOME REANNOTATION</scope>
    <source>
        <strain>cv. Columbia</strain>
    </source>
</reference>
<reference key="4">
    <citation type="journal article" date="2003" name="Science">
        <title>Empirical analysis of transcriptional activity in the Arabidopsis genome.</title>
        <authorList>
            <person name="Yamada K."/>
            <person name="Lim J."/>
            <person name="Dale J.M."/>
            <person name="Chen H."/>
            <person name="Shinn P."/>
            <person name="Palm C.J."/>
            <person name="Southwick A.M."/>
            <person name="Wu H.C."/>
            <person name="Kim C.J."/>
            <person name="Nguyen M."/>
            <person name="Pham P.K."/>
            <person name="Cheuk R.F."/>
            <person name="Karlin-Newmann G."/>
            <person name="Liu S.X."/>
            <person name="Lam B."/>
            <person name="Sakano H."/>
            <person name="Wu T."/>
            <person name="Yu G."/>
            <person name="Miranda M."/>
            <person name="Quach H.L."/>
            <person name="Tripp M."/>
            <person name="Chang C.H."/>
            <person name="Lee J.M."/>
            <person name="Toriumi M.J."/>
            <person name="Chan M.M."/>
            <person name="Tang C.C."/>
            <person name="Onodera C.S."/>
            <person name="Deng J.M."/>
            <person name="Akiyama K."/>
            <person name="Ansari Y."/>
            <person name="Arakawa T."/>
            <person name="Banh J."/>
            <person name="Banno F."/>
            <person name="Bowser L."/>
            <person name="Brooks S.Y."/>
            <person name="Carninci P."/>
            <person name="Chao Q."/>
            <person name="Choy N."/>
            <person name="Enju A."/>
            <person name="Goldsmith A.D."/>
            <person name="Gurjal M."/>
            <person name="Hansen N.F."/>
            <person name="Hayashizaki Y."/>
            <person name="Johnson-Hopson C."/>
            <person name="Hsuan V.W."/>
            <person name="Iida K."/>
            <person name="Karnes M."/>
            <person name="Khan S."/>
            <person name="Koesema E."/>
            <person name="Ishida J."/>
            <person name="Jiang P.X."/>
            <person name="Jones T."/>
            <person name="Kawai J."/>
            <person name="Kamiya A."/>
            <person name="Meyers C."/>
            <person name="Nakajima M."/>
            <person name="Narusaka M."/>
            <person name="Seki M."/>
            <person name="Sakurai T."/>
            <person name="Satou M."/>
            <person name="Tamse R."/>
            <person name="Vaysberg M."/>
            <person name="Wallender E.K."/>
            <person name="Wong C."/>
            <person name="Yamamura Y."/>
            <person name="Yuan S."/>
            <person name="Shinozaki K."/>
            <person name="Davis R.W."/>
            <person name="Theologis A."/>
            <person name="Ecker J.R."/>
        </authorList>
    </citation>
    <scope>NUCLEOTIDE SEQUENCE [LARGE SCALE MRNA]</scope>
    <source>
        <strain>cv. Columbia</strain>
    </source>
</reference>
<reference key="5">
    <citation type="journal article" date="2002" name="Science">
        <title>Functional annotation of a full-length Arabidopsis cDNA collection.</title>
        <authorList>
            <person name="Seki M."/>
            <person name="Narusaka M."/>
            <person name="Kamiya A."/>
            <person name="Ishida J."/>
            <person name="Satou M."/>
            <person name="Sakurai T."/>
            <person name="Nakajima M."/>
            <person name="Enju A."/>
            <person name="Akiyama K."/>
            <person name="Oono Y."/>
            <person name="Muramatsu M."/>
            <person name="Hayashizaki Y."/>
            <person name="Kawai J."/>
            <person name="Carninci P."/>
            <person name="Itoh M."/>
            <person name="Ishii Y."/>
            <person name="Arakawa T."/>
            <person name="Shibata K."/>
            <person name="Shinagawa A."/>
            <person name="Shinozaki K."/>
        </authorList>
    </citation>
    <scope>NUCLEOTIDE SEQUENCE [LARGE SCALE MRNA]</scope>
    <source>
        <strain>cv. Columbia</strain>
    </source>
</reference>
<reference key="6">
    <citation type="submission" date="2002-03" db="EMBL/GenBank/DDBJ databases">
        <title>Full-length cDNA from Arabidopsis thaliana.</title>
        <authorList>
            <person name="Brover V.V."/>
            <person name="Troukhan M.E."/>
            <person name="Alexandrov N.A."/>
            <person name="Lu Y.-P."/>
            <person name="Flavell R.B."/>
            <person name="Feldmann K.A."/>
        </authorList>
    </citation>
    <scope>NUCLEOTIDE SEQUENCE [LARGE SCALE MRNA]</scope>
</reference>
<reference key="7">
    <citation type="journal article" date="1997" name="Plant Cell Physiol.">
        <title>Cloning and functional expression of a novel geranylgeranyl pyrophosphate synthase gene from Arabidopsis thaliana in Escherichia coli.</title>
        <authorList>
            <person name="Zhu X.F."/>
            <person name="Suzuki K."/>
            <person name="Okada K."/>
            <person name="Tanaka K."/>
            <person name="Nakagawa T."/>
            <person name="Kawamukai M."/>
            <person name="Matsuda K."/>
        </authorList>
    </citation>
    <scope>NUCLEOTIDE SEQUENCE [MRNA] OF 4-376</scope>
    <scope>CATALYTIC ACTIVITY</scope>
</reference>
<reference key="8">
    <citation type="journal article" date="2000" name="Plant Physiol.">
        <title>Five geranylgeranyl diphosphate synthases expressed in different organs are localized into three subcellular compartments in Arabidopsis.</title>
        <authorList>
            <person name="Okada K."/>
            <person name="Saito T."/>
            <person name="Nakagawa T."/>
            <person name="Kawamukai M."/>
            <person name="Kamiya Y."/>
        </authorList>
    </citation>
    <scope>NUCLEOTIDE SEQUENCE [MRNA] OF 4-376</scope>
    <scope>TISSUE SPECIFICITY</scope>
    <scope>SUBCELLULAR LOCATION</scope>
</reference>
<reference key="9">
    <citation type="journal article" date="2009" name="Proc. Natl. Acad. Sci. U.S.A.">
        <title>Heterodimeric geranyl(geranyl)diphosphate synthase from hop (Humulus lupulus) and the evolution of monoterpene biosynthesis.</title>
        <authorList>
            <person name="Wang G."/>
            <person name="Dixon R.A."/>
        </authorList>
    </citation>
    <scope>FUNCTION</scope>
    <scope>SUBUNIT</scope>
    <scope>INTERACTION WITH GGR</scope>
</reference>
<gene>
    <name type="primary">GGPPS2</name>
    <name type="synonym">GGPP5</name>
    <name type="synonym">GGPS2</name>
    <name type="ordered locus">At2g23800</name>
    <name type="ORF">F27L4.2</name>
</gene>
<dbReference type="EC" id="2.5.1.-"/>
<dbReference type="EC" id="2.5.1.1"/>
<dbReference type="EC" id="2.5.1.29" evidence="7"/>
<dbReference type="EC" id="2.5.1.10"/>
<dbReference type="EMBL" id="U44876">
    <property type="protein sequence ID" value="AAB67730.1"/>
    <property type="status" value="ALT_FRAME"/>
    <property type="molecule type" value="mRNA"/>
</dbReference>
<dbReference type="EMBL" id="AC004482">
    <property type="protein sequence ID" value="AAC17083.1"/>
    <property type="molecule type" value="Genomic_DNA"/>
</dbReference>
<dbReference type="EMBL" id="CP002685">
    <property type="protein sequence ID" value="AEC07492.1"/>
    <property type="molecule type" value="Genomic_DNA"/>
</dbReference>
<dbReference type="EMBL" id="BT005328">
    <property type="protein sequence ID" value="AAO63392.1"/>
    <property type="molecule type" value="mRNA"/>
</dbReference>
<dbReference type="EMBL" id="AK117954">
    <property type="protein sequence ID" value="BAC42592.1"/>
    <property type="molecule type" value="mRNA"/>
</dbReference>
<dbReference type="EMBL" id="AY087521">
    <property type="protein sequence ID" value="AAM65063.1"/>
    <property type="molecule type" value="mRNA"/>
</dbReference>
<dbReference type="EMBL" id="D85029">
    <property type="protein sequence ID" value="BAA19583.1"/>
    <property type="molecule type" value="mRNA"/>
</dbReference>
<dbReference type="PIR" id="S71230">
    <property type="entry name" value="S71230"/>
</dbReference>
<dbReference type="PIR" id="T02429">
    <property type="entry name" value="T02429"/>
</dbReference>
<dbReference type="RefSeq" id="NP_179960.1">
    <property type="nucleotide sequence ID" value="NM_127943.3"/>
</dbReference>
<dbReference type="SMR" id="O04046"/>
<dbReference type="FunCoup" id="O04046">
    <property type="interactions" value="18"/>
</dbReference>
<dbReference type="STRING" id="3702.O04046"/>
<dbReference type="PaxDb" id="3702-AT2G23800.1"/>
<dbReference type="ProteomicsDB" id="220743"/>
<dbReference type="EnsemblPlants" id="AT2G23800.1">
    <property type="protein sequence ID" value="AT2G23800.1"/>
    <property type="gene ID" value="AT2G23800"/>
</dbReference>
<dbReference type="GeneID" id="816912"/>
<dbReference type="Gramene" id="AT2G23800.1">
    <property type="protein sequence ID" value="AT2G23800.1"/>
    <property type="gene ID" value="AT2G23800"/>
</dbReference>
<dbReference type="KEGG" id="ath:AT2G23800"/>
<dbReference type="Araport" id="AT2G23800"/>
<dbReference type="TAIR" id="AT2G23800">
    <property type="gene designation" value="GGPS2"/>
</dbReference>
<dbReference type="eggNOG" id="KOG0776">
    <property type="taxonomic scope" value="Eukaryota"/>
</dbReference>
<dbReference type="HOGENOM" id="CLU_014015_0_0_1"/>
<dbReference type="InParanoid" id="O04046"/>
<dbReference type="OMA" id="QENAAMP"/>
<dbReference type="OrthoDB" id="6921389at2759"/>
<dbReference type="PhylomeDB" id="O04046"/>
<dbReference type="BioCyc" id="ARA:AT2G23800-MONOMER"/>
<dbReference type="BioCyc" id="MetaCyc:AT2G23800-MONOMER"/>
<dbReference type="UniPathway" id="UPA00259">
    <property type="reaction ID" value="UER00368"/>
</dbReference>
<dbReference type="UniPathway" id="UPA00260">
    <property type="reaction ID" value="UER00369"/>
</dbReference>
<dbReference type="UniPathway" id="UPA00389">
    <property type="reaction ID" value="UER00564"/>
</dbReference>
<dbReference type="PRO" id="PR:O04046"/>
<dbReference type="Proteomes" id="UP000006548">
    <property type="component" value="Chromosome 2"/>
</dbReference>
<dbReference type="ExpressionAtlas" id="O04046">
    <property type="expression patterns" value="baseline and differential"/>
</dbReference>
<dbReference type="GO" id="GO:0005783">
    <property type="term" value="C:endoplasmic reticulum"/>
    <property type="evidence" value="ECO:0000314"/>
    <property type="project" value="TAIR"/>
</dbReference>
<dbReference type="GO" id="GO:0004337">
    <property type="term" value="F:(2E,6E)-farnesyl diphosphate synthase activity"/>
    <property type="evidence" value="ECO:0007669"/>
    <property type="project" value="UniProtKB-EC"/>
</dbReference>
<dbReference type="GO" id="GO:0004161">
    <property type="term" value="F:dimethylallyltranstransferase activity"/>
    <property type="evidence" value="ECO:0007669"/>
    <property type="project" value="UniProtKB-EC"/>
</dbReference>
<dbReference type="GO" id="GO:0004311">
    <property type="term" value="F:geranylgeranyl diphosphate synthase activity"/>
    <property type="evidence" value="ECO:0000314"/>
    <property type="project" value="TAIR"/>
</dbReference>
<dbReference type="GO" id="GO:0046872">
    <property type="term" value="F:metal ion binding"/>
    <property type="evidence" value="ECO:0007669"/>
    <property type="project" value="UniProtKB-KW"/>
</dbReference>
<dbReference type="GO" id="GO:0016117">
    <property type="term" value="P:carotenoid biosynthetic process"/>
    <property type="evidence" value="ECO:0007669"/>
    <property type="project" value="UniProtKB-KW"/>
</dbReference>
<dbReference type="GO" id="GO:0045337">
    <property type="term" value="P:farnesyl diphosphate biosynthetic process"/>
    <property type="evidence" value="ECO:0007669"/>
    <property type="project" value="UniProtKB-UniPathway"/>
</dbReference>
<dbReference type="GO" id="GO:0033384">
    <property type="term" value="P:geranyl diphosphate biosynthetic process"/>
    <property type="evidence" value="ECO:0007669"/>
    <property type="project" value="UniProtKB-UniPathway"/>
</dbReference>
<dbReference type="GO" id="GO:0033386">
    <property type="term" value="P:geranylgeranyl diphosphate biosynthetic process"/>
    <property type="evidence" value="ECO:0007669"/>
    <property type="project" value="UniProtKB-UniPathway"/>
</dbReference>
<dbReference type="GO" id="GO:0008299">
    <property type="term" value="P:isoprenoid biosynthetic process"/>
    <property type="evidence" value="ECO:0000304"/>
    <property type="project" value="TAIR"/>
</dbReference>
<dbReference type="CDD" id="cd00685">
    <property type="entry name" value="Trans_IPPS_HT"/>
    <property type="match status" value="1"/>
</dbReference>
<dbReference type="FunFam" id="1.10.600.10:FF:000001">
    <property type="entry name" value="Geranylgeranyl diphosphate synthase"/>
    <property type="match status" value="1"/>
</dbReference>
<dbReference type="Gene3D" id="1.10.600.10">
    <property type="entry name" value="Farnesyl Diphosphate Synthase"/>
    <property type="match status" value="1"/>
</dbReference>
<dbReference type="InterPro" id="IPR008949">
    <property type="entry name" value="Isoprenoid_synthase_dom_sf"/>
</dbReference>
<dbReference type="InterPro" id="IPR000092">
    <property type="entry name" value="Polyprenyl_synt"/>
</dbReference>
<dbReference type="InterPro" id="IPR033749">
    <property type="entry name" value="Polyprenyl_synt_CS"/>
</dbReference>
<dbReference type="InterPro" id="IPR053378">
    <property type="entry name" value="Prenyl_diphosphate_synthase"/>
</dbReference>
<dbReference type="NCBIfam" id="NF045485">
    <property type="entry name" value="FPPsyn"/>
    <property type="match status" value="1"/>
</dbReference>
<dbReference type="PANTHER" id="PTHR43281">
    <property type="entry name" value="FARNESYL DIPHOSPHATE SYNTHASE"/>
    <property type="match status" value="1"/>
</dbReference>
<dbReference type="PANTHER" id="PTHR43281:SF18">
    <property type="entry name" value="HETERODIMERIC GERANYLGERANYL PYROPHOSPHATE SYNTHASE LARGE SUBUNIT 2"/>
    <property type="match status" value="1"/>
</dbReference>
<dbReference type="Pfam" id="PF00348">
    <property type="entry name" value="polyprenyl_synt"/>
    <property type="match status" value="1"/>
</dbReference>
<dbReference type="SFLD" id="SFLDS00005">
    <property type="entry name" value="Isoprenoid_Synthase_Type_I"/>
    <property type="match status" value="1"/>
</dbReference>
<dbReference type="SFLD" id="SFLDG01017">
    <property type="entry name" value="Polyprenyl_Transferase_Like"/>
    <property type="match status" value="1"/>
</dbReference>
<dbReference type="SUPFAM" id="SSF48576">
    <property type="entry name" value="Terpenoid synthases"/>
    <property type="match status" value="1"/>
</dbReference>
<dbReference type="PROSITE" id="PS00723">
    <property type="entry name" value="POLYPRENYL_SYNTHASE_1"/>
    <property type="match status" value="1"/>
</dbReference>
<dbReference type="PROSITE" id="PS00444">
    <property type="entry name" value="POLYPRENYL_SYNTHASE_2"/>
    <property type="match status" value="1"/>
</dbReference>
<name>GGPP2_ARATH</name>
<organism>
    <name type="scientific">Arabidopsis thaliana</name>
    <name type="common">Mouse-ear cress</name>
    <dbReference type="NCBI Taxonomy" id="3702"/>
    <lineage>
        <taxon>Eukaryota</taxon>
        <taxon>Viridiplantae</taxon>
        <taxon>Streptophyta</taxon>
        <taxon>Embryophyta</taxon>
        <taxon>Tracheophyta</taxon>
        <taxon>Spermatophyta</taxon>
        <taxon>Magnoliopsida</taxon>
        <taxon>eudicotyledons</taxon>
        <taxon>Gunneridae</taxon>
        <taxon>Pentapetalae</taxon>
        <taxon>rosids</taxon>
        <taxon>malvids</taxon>
        <taxon>Brassicales</taxon>
        <taxon>Brassicaceae</taxon>
        <taxon>Camelineae</taxon>
        <taxon>Arabidopsis</taxon>
    </lineage>
</organism>
<evidence type="ECO:0000250" key="1"/>
<evidence type="ECO:0000250" key="2">
    <source>
        <dbReference type="UniProtKB" id="P14324"/>
    </source>
</evidence>
<evidence type="ECO:0000250" key="3">
    <source>
        <dbReference type="UniProtKB" id="Q12051"/>
    </source>
</evidence>
<evidence type="ECO:0000255" key="4"/>
<evidence type="ECO:0000269" key="5">
    <source>
    </source>
</evidence>
<evidence type="ECO:0000269" key="6">
    <source>
    </source>
</evidence>
<evidence type="ECO:0000269" key="7">
    <source>
    </source>
</evidence>
<evidence type="ECO:0000305" key="8"/>
<evidence type="ECO:0000305" key="9">
    <source>
    </source>
</evidence>
<sequence length="376" mass="41339">MEPQILFLYLSLFILSLNFFFTNLKPRLVRLFQPSLESRVKTALLSRKEVAAFLDSPIVEDEEGEEREEEEEGGIVSNANFTFEFDPYMMSKAESVNKALEEAIPVGEPLKIHEAMRYAILAAGKRVRPILCLASCELVGGQENAAMPAACAVEMIHTMSLIKDDLPCMDNDDLRRGKPTTHKVYGEGVAILSGGALLSLAFEHMTTAEISSERMVWAVRELARSIGTRGLVAGQAMDISSEGLDLNEVGLEHLEFIHVHKTAVLLETAAVLGAIIGGGSDEEIESVRKFARCIGLLFQVVDDILDETKSSEELGKTAGKDQLAGKLTYPKLIGLEKSKEFVKRLTKDARQHLQGFSSEKVAPLVALTTFIANRNK</sequence>
<comment type="function">
    <text evidence="6">Heterodimeric geranyl(geranyl)-diphosphate (GPP) synthase large subunit. In vitro, the large subunit catalyzes mainly the trans-addition of the three molecules of IPP onto DMAPP to form geranylgeranyl pyrophosphate while the small subunit alone is inactive. Upon association of the two subunits, the product profile is not changed.</text>
</comment>
<comment type="catalytic activity">
    <reaction>
        <text>isopentenyl diphosphate + dimethylallyl diphosphate = (2E)-geranyl diphosphate + diphosphate</text>
        <dbReference type="Rhea" id="RHEA:22408"/>
        <dbReference type="ChEBI" id="CHEBI:33019"/>
        <dbReference type="ChEBI" id="CHEBI:57623"/>
        <dbReference type="ChEBI" id="CHEBI:58057"/>
        <dbReference type="ChEBI" id="CHEBI:128769"/>
        <dbReference type="EC" id="2.5.1.1"/>
    </reaction>
</comment>
<comment type="catalytic activity">
    <reaction>
        <text>isopentenyl diphosphate + (2E)-geranyl diphosphate = (2E,6E)-farnesyl diphosphate + diphosphate</text>
        <dbReference type="Rhea" id="RHEA:19361"/>
        <dbReference type="ChEBI" id="CHEBI:33019"/>
        <dbReference type="ChEBI" id="CHEBI:58057"/>
        <dbReference type="ChEBI" id="CHEBI:128769"/>
        <dbReference type="ChEBI" id="CHEBI:175763"/>
        <dbReference type="EC" id="2.5.1.10"/>
    </reaction>
</comment>
<comment type="catalytic activity">
    <reaction evidence="7">
        <text>isopentenyl diphosphate + (2E,6E)-farnesyl diphosphate = (2E,6E,10E)-geranylgeranyl diphosphate + diphosphate</text>
        <dbReference type="Rhea" id="RHEA:17653"/>
        <dbReference type="ChEBI" id="CHEBI:33019"/>
        <dbReference type="ChEBI" id="CHEBI:58756"/>
        <dbReference type="ChEBI" id="CHEBI:128769"/>
        <dbReference type="ChEBI" id="CHEBI:175763"/>
        <dbReference type="EC" id="2.5.1.29"/>
    </reaction>
    <physiologicalReaction direction="left-to-right" evidence="9">
        <dbReference type="Rhea" id="RHEA:17654"/>
    </physiologicalReaction>
</comment>
<comment type="cofactor">
    <cofactor evidence="1">
        <name>Mg(2+)</name>
        <dbReference type="ChEBI" id="CHEBI:18420"/>
    </cofactor>
    <text evidence="1">Binds 2 Mg(2+) ions per subunit.</text>
</comment>
<comment type="pathway">
    <text>Isoprenoid biosynthesis; farnesyl diphosphate biosynthesis; farnesyl diphosphate from geranyl diphosphate and isopentenyl diphosphate: step 1/1.</text>
</comment>
<comment type="pathway">
    <text>Isoprenoid biosynthesis; geranyl diphosphate biosynthesis; geranyl diphosphate from dimethylallyl diphosphate and isopentenyl diphosphate: step 1/1.</text>
</comment>
<comment type="pathway">
    <text>Isoprenoid biosynthesis; geranylgeranyl diphosphate biosynthesis; geranylgeranyl diphosphate from farnesyl diphosphate and isopentenyl diphosphate: step 1/1.</text>
</comment>
<comment type="subunit">
    <text evidence="1 6">Monomer (By similarity). Part of a heterodimeric geranyl(geranyl)diphosphate synthase. Interacts with GGR.</text>
</comment>
<comment type="subcellular location">
    <subcellularLocation>
        <location evidence="5">Endoplasmic reticulum</location>
    </subcellularLocation>
</comment>
<comment type="tissue specificity">
    <text evidence="5">Mainly expressed in flowers.</text>
</comment>
<comment type="similarity">
    <text evidence="8">Belongs to the FPP/GGPP synthase family.</text>
</comment>
<comment type="sequence caution" evidence="8">
    <conflict type="frameshift">
        <sequence resource="EMBL-CDS" id="AAB67730"/>
    </conflict>
</comment>